<feature type="chain" id="PRO_0000082274" description="Taste receptor type 2 member 38">
    <location>
        <begin position="1"/>
        <end position="333"/>
    </location>
</feature>
<feature type="topological domain" description="Extracellular" evidence="2">
    <location>
        <begin position="1"/>
        <end position="17"/>
    </location>
</feature>
<feature type="transmembrane region" description="Helical; Name=1" evidence="2">
    <location>
        <begin position="18"/>
        <end position="38"/>
    </location>
</feature>
<feature type="topological domain" description="Cytoplasmic" evidence="2">
    <location>
        <begin position="39"/>
        <end position="55"/>
    </location>
</feature>
<feature type="transmembrane region" description="Helical; Name=2" evidence="2">
    <location>
        <begin position="56"/>
        <end position="76"/>
    </location>
</feature>
<feature type="topological domain" description="Extracellular" evidence="2">
    <location>
        <begin position="77"/>
        <end position="94"/>
    </location>
</feature>
<feature type="transmembrane region" description="Helical; Name=3" evidence="2">
    <location>
        <begin position="95"/>
        <end position="115"/>
    </location>
</feature>
<feature type="topological domain" description="Cytoplasmic" evidence="2">
    <location>
        <begin position="116"/>
        <end position="142"/>
    </location>
</feature>
<feature type="transmembrane region" description="Helical; Name=4" evidence="2">
    <location>
        <begin position="143"/>
        <end position="163"/>
    </location>
</feature>
<feature type="topological domain" description="Extracellular" evidence="2">
    <location>
        <begin position="164"/>
        <end position="190"/>
    </location>
</feature>
<feature type="transmembrane region" description="Helical; Name=5" evidence="2">
    <location>
        <begin position="191"/>
        <end position="211"/>
    </location>
</feature>
<feature type="topological domain" description="Cytoplasmic" evidence="2">
    <location>
        <begin position="212"/>
        <end position="251"/>
    </location>
</feature>
<feature type="transmembrane region" description="Helical; Name=6" evidence="2">
    <location>
        <begin position="252"/>
        <end position="272"/>
    </location>
</feature>
<feature type="topological domain" description="Extracellular" evidence="2">
    <location>
        <begin position="273"/>
        <end position="276"/>
    </location>
</feature>
<feature type="transmembrane region" description="Helical; Name=7" evidence="2">
    <location>
        <begin position="277"/>
        <end position="297"/>
    </location>
</feature>
<feature type="topological domain" description="Cytoplasmic" evidence="2">
    <location>
        <begin position="298"/>
        <end position="333"/>
    </location>
</feature>
<feature type="glycosylation site" description="N-linked (GlcNAc...) asparagine" evidence="2">
    <location>
        <position position="178"/>
    </location>
</feature>
<protein>
    <recommendedName>
        <fullName>Taste receptor type 2 member 38</fullName>
        <shortName>T2R38</shortName>
    </recommendedName>
</protein>
<evidence type="ECO:0000250" key="1"/>
<evidence type="ECO:0000255" key="2"/>
<evidence type="ECO:0000305" key="3"/>
<name>T2R38_HYLKL</name>
<sequence>MLTLTRICTVSYEVRSTFLFISVLEFAVGFLTNAFIFLVNFWDVVKRQPLSNSDCVLLCLSISRLFLHGLLFLSAIQLTHFQKLSEPLNHSYHAIIMLWMIANQANLWLATCLSLLYCSKLIRSSHTFLICLASWVSRKICQMLLGIILCSCICTVLCVWCYFSRPHFTVTTVLFTNNNTRLNWQIKDLNLFYSFLFCYLWSVPPFLLFLVSSGMLTVSLGRHMRTMKVYTRDFRDPSLEAHIKALKSLVSFFCFFVISSCAAFISVPLLILWRDKIGVMVCVGIMAACPSGHAAILISGNAKLRRAVTTILLWAQSSLKVRADHKADSRTLC</sequence>
<proteinExistence type="inferred from homology"/>
<gene>
    <name type="primary">TAS2R38</name>
</gene>
<comment type="function">
    <text evidence="1">Receptor that may play a role in the perception of bitterness and is gustducin-linked. May play a role in sensing the chemical composition of the gastrointestinal content. The activity of this receptor may stimulate alpha gustducin, mediate PLC-beta-2 activation and lead to the gating of TRPM5 (By similarity).</text>
</comment>
<comment type="subcellular location">
    <subcellularLocation>
        <location>Membrane</location>
        <topology>Multi-pass membrane protein</topology>
    </subcellularLocation>
</comment>
<comment type="miscellaneous">
    <text>Most taste cells may be activated by a limited number of bitter compounds; individual taste cells can discriminate among bitter stimuli.</text>
</comment>
<comment type="similarity">
    <text evidence="3">Belongs to the G-protein coupled receptor T2R family.</text>
</comment>
<accession>Q697L2</accession>
<organism>
    <name type="scientific">Hylobates klossii</name>
    <name type="common">Kloss's gibbon</name>
    <dbReference type="NCBI Taxonomy" id="9587"/>
    <lineage>
        <taxon>Eukaryota</taxon>
        <taxon>Metazoa</taxon>
        <taxon>Chordata</taxon>
        <taxon>Craniata</taxon>
        <taxon>Vertebrata</taxon>
        <taxon>Euteleostomi</taxon>
        <taxon>Mammalia</taxon>
        <taxon>Eutheria</taxon>
        <taxon>Euarchontoglires</taxon>
        <taxon>Primates</taxon>
        <taxon>Haplorrhini</taxon>
        <taxon>Catarrhini</taxon>
        <taxon>Hylobatidae</taxon>
        <taxon>Hylobates</taxon>
    </lineage>
</organism>
<keyword id="KW-0297">G-protein coupled receptor</keyword>
<keyword id="KW-0325">Glycoprotein</keyword>
<keyword id="KW-0472">Membrane</keyword>
<keyword id="KW-0675">Receptor</keyword>
<keyword id="KW-0716">Sensory transduction</keyword>
<keyword id="KW-0919">Taste</keyword>
<keyword id="KW-0807">Transducer</keyword>
<keyword id="KW-0812">Transmembrane</keyword>
<keyword id="KW-1133">Transmembrane helix</keyword>
<dbReference type="EMBL" id="AY566405">
    <property type="protein sequence ID" value="AAS67625.1"/>
    <property type="molecule type" value="Genomic_DNA"/>
</dbReference>
<dbReference type="SMR" id="Q697L2"/>
<dbReference type="GlyCosmos" id="Q697L2">
    <property type="glycosylation" value="1 site, No reported glycans"/>
</dbReference>
<dbReference type="GO" id="GO:0005886">
    <property type="term" value="C:plasma membrane"/>
    <property type="evidence" value="ECO:0007669"/>
    <property type="project" value="UniProtKB-ARBA"/>
</dbReference>
<dbReference type="GO" id="GO:0033038">
    <property type="term" value="F:bitter taste receptor activity"/>
    <property type="evidence" value="ECO:0007669"/>
    <property type="project" value="InterPro"/>
</dbReference>
<dbReference type="GO" id="GO:0004930">
    <property type="term" value="F:G protein-coupled receptor activity"/>
    <property type="evidence" value="ECO:0007669"/>
    <property type="project" value="UniProtKB-KW"/>
</dbReference>
<dbReference type="CDD" id="cd15025">
    <property type="entry name" value="7tm_TAS2R38"/>
    <property type="match status" value="1"/>
</dbReference>
<dbReference type="FunFam" id="1.20.1070.10:FF:000055">
    <property type="entry name" value="Taste receptor type 2"/>
    <property type="match status" value="1"/>
</dbReference>
<dbReference type="Gene3D" id="1.20.1070.10">
    <property type="entry name" value="Rhodopsin 7-helix transmembrane proteins"/>
    <property type="match status" value="1"/>
</dbReference>
<dbReference type="InterPro" id="IPR007960">
    <property type="entry name" value="TAS2R"/>
</dbReference>
<dbReference type="InterPro" id="IPR030050">
    <property type="entry name" value="TAS2R38"/>
</dbReference>
<dbReference type="PANTHER" id="PTHR11394">
    <property type="entry name" value="TASTE RECEPTOR TYPE 2"/>
    <property type="match status" value="1"/>
</dbReference>
<dbReference type="PANTHER" id="PTHR11394:SF52">
    <property type="entry name" value="TASTE RECEPTOR TYPE 2 MEMBER 38"/>
    <property type="match status" value="1"/>
</dbReference>
<dbReference type="Pfam" id="PF05296">
    <property type="entry name" value="TAS2R"/>
    <property type="match status" value="1"/>
</dbReference>
<dbReference type="SUPFAM" id="SSF81321">
    <property type="entry name" value="Family A G protein-coupled receptor-like"/>
    <property type="match status" value="1"/>
</dbReference>
<reference key="1">
    <citation type="submission" date="2004-03" db="EMBL/GenBank/DDBJ databases">
        <title>A global survey of haplotype frequencies for the TAS2R38 (PTC) gene.</title>
        <authorList>
            <person name="Davidson A.C."/>
            <person name="Pakstis A.J."/>
            <person name="Speed W.C."/>
            <person name="Odunsi A."/>
            <person name="Okonafua F."/>
            <person name="Kajuna S.L.J."/>
            <person name="Kungulilo S.V."/>
            <person name="Friedlaender J."/>
            <person name="Lu R.-B."/>
            <person name="Grigorenko E.L."/>
            <person name="Zhukova O.V."/>
            <person name="Schultz L.O."/>
            <person name="Bonne-Tamir B."/>
            <person name="Duffy V."/>
            <person name="Bartoshuk L."/>
            <person name="Kidd K.K."/>
            <person name="Kidd J.R."/>
        </authorList>
    </citation>
    <scope>NUCLEOTIDE SEQUENCE [GENOMIC DNA]</scope>
</reference>